<sequence length="354" mass="39409">MGKVLAAALVGIAAALAAERLLAFRNRLNATREVDPVALPNCYLIKGIETGSEDIDILPNGLAFISSGLKYPGLKSFAPDKPGEIFLMDLNEKKPKASELRISRGFDVGSFNPHGISTYIDKDDTVYLFVVNHPHQKSTVELFKFMEDDNSLVHLKTIRHDLLTSVNDVVAVGPDSFYATNDHYFYDFILMFLEMYLGLTWSNVVYYSPKEVKEVAAGFYSANGINISPDKKYIYIADILDHNVHVMEKHADWNLTHVKTLQLDTLADNLSVDPDTGDIWTGCHPNGMKLFYDDPDNPPASEVLRIQNILAEQPTVTRVYAENGSVLQGTSVATVYDGKLLIGTVFHRALYCEL</sequence>
<organism>
    <name type="scientific">Gallus gallus</name>
    <name type="common">Chicken</name>
    <dbReference type="NCBI Taxonomy" id="9031"/>
    <lineage>
        <taxon>Eukaryota</taxon>
        <taxon>Metazoa</taxon>
        <taxon>Chordata</taxon>
        <taxon>Craniata</taxon>
        <taxon>Vertebrata</taxon>
        <taxon>Euteleostomi</taxon>
        <taxon>Archelosauria</taxon>
        <taxon>Archosauria</taxon>
        <taxon>Dinosauria</taxon>
        <taxon>Saurischia</taxon>
        <taxon>Theropoda</taxon>
        <taxon>Coelurosauria</taxon>
        <taxon>Aves</taxon>
        <taxon>Neognathae</taxon>
        <taxon>Galloanserae</taxon>
        <taxon>Galliformes</taxon>
        <taxon>Phasianidae</taxon>
        <taxon>Phasianinae</taxon>
        <taxon>Gallus</taxon>
    </lineage>
</organism>
<name>PON2_CHICK</name>
<feature type="chain" id="PRO_0000223294" description="Serum paraoxonase/arylesterase 2">
    <location>
        <begin position="1"/>
        <end position="354"/>
    </location>
</feature>
<feature type="signal peptide" description="Not cleaved" evidence="2">
    <location>
        <begin position="1"/>
        <end status="unknown"/>
    </location>
</feature>
<feature type="active site" description="Proton acceptor" evidence="1">
    <location>
        <position position="114"/>
    </location>
</feature>
<feature type="binding site" evidence="1">
    <location>
        <position position="53"/>
    </location>
    <ligand>
        <name>Ca(2+)</name>
        <dbReference type="ChEBI" id="CHEBI:29108"/>
        <label>1</label>
        <note>catalytic</note>
    </ligand>
</feature>
<feature type="binding site" evidence="1">
    <location>
        <position position="54"/>
    </location>
    <ligand>
        <name>Ca(2+)</name>
        <dbReference type="ChEBI" id="CHEBI:29108"/>
        <label>2</label>
    </ligand>
</feature>
<feature type="binding site" evidence="1">
    <location>
        <position position="116"/>
    </location>
    <ligand>
        <name>Ca(2+)</name>
        <dbReference type="ChEBI" id="CHEBI:29108"/>
        <label>2</label>
    </ligand>
</feature>
<feature type="binding site" evidence="1">
    <location>
        <position position="167"/>
    </location>
    <ligand>
        <name>Ca(2+)</name>
        <dbReference type="ChEBI" id="CHEBI:29108"/>
        <label>1</label>
        <note>catalytic</note>
    </ligand>
</feature>
<feature type="binding site" evidence="1">
    <location>
        <position position="168"/>
    </location>
    <ligand>
        <name>Ca(2+)</name>
        <dbReference type="ChEBI" id="CHEBI:29108"/>
        <label>2</label>
    </ligand>
</feature>
<feature type="binding site" evidence="1">
    <location>
        <position position="223"/>
    </location>
    <ligand>
        <name>Ca(2+)</name>
        <dbReference type="ChEBI" id="CHEBI:29108"/>
        <label>1</label>
        <note>catalytic</note>
    </ligand>
</feature>
<feature type="binding site" evidence="1">
    <location>
        <position position="268"/>
    </location>
    <ligand>
        <name>Ca(2+)</name>
        <dbReference type="ChEBI" id="CHEBI:29108"/>
        <label>1</label>
        <note>catalytic</note>
    </ligand>
</feature>
<feature type="binding site" evidence="1">
    <location>
        <position position="269"/>
    </location>
    <ligand>
        <name>Ca(2+)</name>
        <dbReference type="ChEBI" id="CHEBI:29108"/>
        <label>1</label>
        <note>catalytic</note>
    </ligand>
</feature>
<feature type="glycosylation site" description="N-linked (GlcNAc...) asparagine" evidence="2">
    <location>
        <position position="29"/>
    </location>
</feature>
<feature type="glycosylation site" description="N-linked (GlcNAc...) asparagine" evidence="2">
    <location>
        <position position="254"/>
    </location>
</feature>
<feature type="glycosylation site" description="N-linked (GlcNAc...) asparagine" evidence="2">
    <location>
        <position position="269"/>
    </location>
</feature>
<feature type="glycosylation site" description="N-linked (GlcNAc...) asparagine" evidence="2">
    <location>
        <position position="323"/>
    </location>
</feature>
<feature type="disulfide bond" evidence="1">
    <location>
        <begin position="42"/>
        <end position="352"/>
    </location>
</feature>
<evidence type="ECO:0000250" key="1"/>
<evidence type="ECO:0000255" key="2"/>
<evidence type="ECO:0000305" key="3"/>
<proteinExistence type="evidence at transcript level"/>
<comment type="function">
    <text>The absence of paraoxonase activity in turkey and chicken blood and in turkey liver indicates that PON2, if expressed, does not hydrolyze paraoxon.</text>
</comment>
<comment type="catalytic activity">
    <reaction>
        <text>a phenyl acetate + H2O = a phenol + acetate + H(+)</text>
        <dbReference type="Rhea" id="RHEA:17309"/>
        <dbReference type="ChEBI" id="CHEBI:15377"/>
        <dbReference type="ChEBI" id="CHEBI:15378"/>
        <dbReference type="ChEBI" id="CHEBI:30089"/>
        <dbReference type="ChEBI" id="CHEBI:33853"/>
        <dbReference type="ChEBI" id="CHEBI:140310"/>
        <dbReference type="EC" id="3.1.1.2"/>
    </reaction>
</comment>
<comment type="catalytic activity">
    <reaction>
        <text>An aryl dialkyl phosphate + H2O = dialkyl phosphate + an aryl alcohol.</text>
        <dbReference type="EC" id="3.1.8.1"/>
    </reaction>
</comment>
<comment type="cofactor">
    <cofactor evidence="1">
        <name>Ca(2+)</name>
        <dbReference type="ChEBI" id="CHEBI:29108"/>
    </cofactor>
    <text evidence="1">Binds 2 calcium ions per subunit.</text>
</comment>
<comment type="subcellular location">
    <subcellularLocation>
        <location evidence="1">Membrane</location>
        <topology evidence="1">Peripheral membrane protein</topology>
    </subcellularLocation>
</comment>
<comment type="PTM">
    <text evidence="1">Glycosylated.</text>
</comment>
<comment type="PTM">
    <text evidence="1">The signal sequence is not cleaved.</text>
</comment>
<comment type="similarity">
    <text evidence="3">Belongs to the paraoxonase family.</text>
</comment>
<keyword id="KW-0106">Calcium</keyword>
<keyword id="KW-1015">Disulfide bond</keyword>
<keyword id="KW-0325">Glycoprotein</keyword>
<keyword id="KW-0378">Hydrolase</keyword>
<keyword id="KW-0472">Membrane</keyword>
<keyword id="KW-0479">Metal-binding</keyword>
<keyword id="KW-1185">Reference proteome</keyword>
<keyword id="KW-0732">Signal</keyword>
<accession>Q90952</accession>
<reference key="1">
    <citation type="journal article" date="1996" name="Genomics">
        <title>The human serum paraoxonase/arylesterase gene (PON1) is one member of a multigene family.</title>
        <authorList>
            <person name="Primo-Parmo S.L."/>
            <person name="Sorenson R.C."/>
            <person name="Teiber J."/>
            <person name="La Du B.N."/>
        </authorList>
    </citation>
    <scope>NUCLEOTIDE SEQUENCE [MRNA]</scope>
    <source>
        <tissue>Liver</tissue>
    </source>
</reference>
<gene>
    <name type="primary">PON2</name>
</gene>
<dbReference type="EC" id="3.1.1.2"/>
<dbReference type="EC" id="3.1.8.1"/>
<dbReference type="EMBL" id="L47573">
    <property type="protein sequence ID" value="AAC42234.1"/>
    <property type="molecule type" value="mRNA"/>
</dbReference>
<dbReference type="SMR" id="Q90952"/>
<dbReference type="FunCoup" id="Q90952">
    <property type="interactions" value="1189"/>
</dbReference>
<dbReference type="STRING" id="9031.ENSGALP00000037229"/>
<dbReference type="GlyCosmos" id="Q90952">
    <property type="glycosylation" value="4 sites, No reported glycans"/>
</dbReference>
<dbReference type="GlyGen" id="Q90952">
    <property type="glycosylation" value="4 sites"/>
</dbReference>
<dbReference type="PaxDb" id="9031-ENSGALP00000037229"/>
<dbReference type="VEuPathDB" id="HostDB:geneid_395830"/>
<dbReference type="eggNOG" id="ENOG502QUCT">
    <property type="taxonomic scope" value="Eukaryota"/>
</dbReference>
<dbReference type="InParanoid" id="Q90952"/>
<dbReference type="PhylomeDB" id="Q90952"/>
<dbReference type="PRO" id="PR:Q90952"/>
<dbReference type="Proteomes" id="UP000000539">
    <property type="component" value="Unassembled WGS sequence"/>
</dbReference>
<dbReference type="GO" id="GO:0005576">
    <property type="term" value="C:extracellular region"/>
    <property type="evidence" value="ECO:0007669"/>
    <property type="project" value="InterPro"/>
</dbReference>
<dbReference type="GO" id="GO:0016020">
    <property type="term" value="C:membrane"/>
    <property type="evidence" value="ECO:0007669"/>
    <property type="project" value="UniProtKB-SubCell"/>
</dbReference>
<dbReference type="GO" id="GO:0004063">
    <property type="term" value="F:aryldialkylphosphatase activity"/>
    <property type="evidence" value="ECO:0007669"/>
    <property type="project" value="UniProtKB-EC"/>
</dbReference>
<dbReference type="GO" id="GO:0004064">
    <property type="term" value="F:arylesterase activity"/>
    <property type="evidence" value="ECO:0000318"/>
    <property type="project" value="GO_Central"/>
</dbReference>
<dbReference type="GO" id="GO:0046872">
    <property type="term" value="F:metal ion binding"/>
    <property type="evidence" value="ECO:0007669"/>
    <property type="project" value="UniProtKB-KW"/>
</dbReference>
<dbReference type="GO" id="GO:0009636">
    <property type="term" value="P:response to toxic substance"/>
    <property type="evidence" value="ECO:0000318"/>
    <property type="project" value="GO_Central"/>
</dbReference>
<dbReference type="FunFam" id="2.120.10.30:FF:000023">
    <property type="entry name" value="Serum paraoxonase/arylesterase 2"/>
    <property type="match status" value="1"/>
</dbReference>
<dbReference type="Gene3D" id="2.120.10.30">
    <property type="entry name" value="TolB, C-terminal domain"/>
    <property type="match status" value="1"/>
</dbReference>
<dbReference type="InterPro" id="IPR011042">
    <property type="entry name" value="6-blade_b-propeller_TolB-like"/>
</dbReference>
<dbReference type="InterPro" id="IPR002640">
    <property type="entry name" value="Arylesterase"/>
</dbReference>
<dbReference type="InterPro" id="IPR008364">
    <property type="entry name" value="Paraoxonase2"/>
</dbReference>
<dbReference type="InterPro" id="IPR051288">
    <property type="entry name" value="Serum_paraoxonase/arylesterase"/>
</dbReference>
<dbReference type="PANTHER" id="PTHR11799">
    <property type="entry name" value="PARAOXONASE"/>
    <property type="match status" value="1"/>
</dbReference>
<dbReference type="PANTHER" id="PTHR11799:SF12">
    <property type="entry name" value="PARAOXONASE-RELATED"/>
    <property type="match status" value="1"/>
</dbReference>
<dbReference type="Pfam" id="PF01731">
    <property type="entry name" value="Arylesterase"/>
    <property type="match status" value="1"/>
</dbReference>
<dbReference type="PRINTS" id="PR01785">
    <property type="entry name" value="PARAOXONASE"/>
</dbReference>
<dbReference type="PRINTS" id="PR01787">
    <property type="entry name" value="PARAOXONASE2"/>
</dbReference>
<dbReference type="SUPFAM" id="SSF63829">
    <property type="entry name" value="Calcium-dependent phosphotriesterase"/>
    <property type="match status" value="1"/>
</dbReference>
<protein>
    <recommendedName>
        <fullName>Serum paraoxonase/arylesterase 2</fullName>
        <shortName>PON 2</shortName>
        <ecNumber>3.1.1.2</ecNumber>
        <ecNumber>3.1.8.1</ecNumber>
    </recommendedName>
    <alternativeName>
        <fullName>Aromatic esterase 2</fullName>
        <shortName>A-esterase 2</shortName>
    </alternativeName>
    <alternativeName>
        <fullName>Serum aryldialkylphosphatase 2</fullName>
    </alternativeName>
</protein>